<reference key="1">
    <citation type="journal article" date="2007" name="J. Bacteriol.">
        <title>Genome sequence and analysis of the soil cellulolytic actinomycete Thermobifida fusca YX.</title>
        <authorList>
            <person name="Lykidis A."/>
            <person name="Mavromatis K."/>
            <person name="Ivanova N."/>
            <person name="Anderson I."/>
            <person name="Land M."/>
            <person name="DiBartolo G."/>
            <person name="Martinez M."/>
            <person name="Lapidus A."/>
            <person name="Lucas S."/>
            <person name="Copeland A."/>
            <person name="Richardson P."/>
            <person name="Wilson D.B."/>
            <person name="Kyrpides N."/>
        </authorList>
    </citation>
    <scope>NUCLEOTIDE SEQUENCE [LARGE SCALE GENOMIC DNA]</scope>
    <source>
        <strain>YX</strain>
    </source>
</reference>
<evidence type="ECO:0000255" key="1">
    <source>
        <dbReference type="HAMAP-Rule" id="MF_00283"/>
    </source>
</evidence>
<name>SYFB_THEFY</name>
<feature type="chain" id="PRO_0000232094" description="Phenylalanine--tRNA ligase beta subunit">
    <location>
        <begin position="1"/>
        <end position="831"/>
    </location>
</feature>
<feature type="domain" description="tRNA-binding" evidence="1">
    <location>
        <begin position="42"/>
        <end position="157"/>
    </location>
</feature>
<feature type="domain" description="B5" evidence="1">
    <location>
        <begin position="408"/>
        <end position="483"/>
    </location>
</feature>
<feature type="domain" description="FDX-ACB" evidence="1">
    <location>
        <begin position="737"/>
        <end position="830"/>
    </location>
</feature>
<feature type="binding site" evidence="1">
    <location>
        <position position="461"/>
    </location>
    <ligand>
        <name>Mg(2+)</name>
        <dbReference type="ChEBI" id="CHEBI:18420"/>
        <note>shared with alpha subunit</note>
    </ligand>
</feature>
<feature type="binding site" evidence="1">
    <location>
        <position position="467"/>
    </location>
    <ligand>
        <name>Mg(2+)</name>
        <dbReference type="ChEBI" id="CHEBI:18420"/>
        <note>shared with alpha subunit</note>
    </ligand>
</feature>
<feature type="binding site" evidence="1">
    <location>
        <position position="470"/>
    </location>
    <ligand>
        <name>Mg(2+)</name>
        <dbReference type="ChEBI" id="CHEBI:18420"/>
        <note>shared with alpha subunit</note>
    </ligand>
</feature>
<feature type="binding site" evidence="1">
    <location>
        <position position="471"/>
    </location>
    <ligand>
        <name>Mg(2+)</name>
        <dbReference type="ChEBI" id="CHEBI:18420"/>
        <note>shared with alpha subunit</note>
    </ligand>
</feature>
<accession>Q47N76</accession>
<sequence length="831" mass="89339">MRVPVSWLREYVALPAEATARELADKLISLGLEVETVEEVGADISGPIVVGRVLTIEELTGFKKPIRFCTVDVGDANGTGEPQGIICGARNFAEGDLVVVSLPGAVLPGGFAISARKTYGRMSEGMICSASELGLWEDHEGIIVLPEGFAEPGTKADDLLGLRESVLDIAVTPDRGYALSLRGIAREVAAAYGVEFTDPAVRPLPSAAEGGYPASVADPAICSRYVLRGVTGFDPAAPTPLWMRRRLHLCGVRSISLAVDITNYVMLELGQPLHAWDRSTLRGPIEVRLARPGEKLETLDHVVRALDPDDILITDESGPINIAGVMGGLSTEIRETSTDILIEAAHFDAAHIARTSRRHQLSSESSRRFERGVDTDIQLAAATRAVELLAELGGATIEDGITHIDHTVPREPIVVRAGHAGRVAGVDYPVETEIARLRQVGCEVVQEGDTLKVTPPSWRPDLTDPNDLAEEVIRNEGYENIPALLPQAPPGRGLTRGQRLRRAVGRTLADRGFFEVLNYPFVGVRDFDRLRLDEDDARRTAVRLANPLNDDEPLLRTTLLPGLFKALVRNVGRGFTDIALFEMGLVYHPKPDAPAKAPILPVDRAPTAEERATLEAALPEQPRHIGAVLAGQRLRSGWWGGGEPATWADAIHTAKEAASVAGVELIVRAAQYAPWHPGRCAALYVADGDREVLVGHAGELHPRVIKAYGLPSRTSALEIDWDRIEAAAAAATAPQISTYPVATQDVALVVDASVPAAEVEAALREGAGELLESVRLFDVYTGDQVGEGRKSLAYALRLRAHDRTLTVEETNRIKDAAVAAAAERTGAVLRG</sequence>
<comment type="catalytic activity">
    <reaction evidence="1">
        <text>tRNA(Phe) + L-phenylalanine + ATP = L-phenylalanyl-tRNA(Phe) + AMP + diphosphate + H(+)</text>
        <dbReference type="Rhea" id="RHEA:19413"/>
        <dbReference type="Rhea" id="RHEA-COMP:9668"/>
        <dbReference type="Rhea" id="RHEA-COMP:9699"/>
        <dbReference type="ChEBI" id="CHEBI:15378"/>
        <dbReference type="ChEBI" id="CHEBI:30616"/>
        <dbReference type="ChEBI" id="CHEBI:33019"/>
        <dbReference type="ChEBI" id="CHEBI:58095"/>
        <dbReference type="ChEBI" id="CHEBI:78442"/>
        <dbReference type="ChEBI" id="CHEBI:78531"/>
        <dbReference type="ChEBI" id="CHEBI:456215"/>
        <dbReference type="EC" id="6.1.1.20"/>
    </reaction>
</comment>
<comment type="cofactor">
    <cofactor evidence="1">
        <name>Mg(2+)</name>
        <dbReference type="ChEBI" id="CHEBI:18420"/>
    </cofactor>
    <text evidence="1">Binds 2 magnesium ions per tetramer.</text>
</comment>
<comment type="subunit">
    <text evidence="1">Tetramer of two alpha and two beta subunits.</text>
</comment>
<comment type="subcellular location">
    <subcellularLocation>
        <location evidence="1">Cytoplasm</location>
    </subcellularLocation>
</comment>
<comment type="similarity">
    <text evidence="1">Belongs to the phenylalanyl-tRNA synthetase beta subunit family. Type 1 subfamily.</text>
</comment>
<keyword id="KW-0030">Aminoacyl-tRNA synthetase</keyword>
<keyword id="KW-0067">ATP-binding</keyword>
<keyword id="KW-0963">Cytoplasm</keyword>
<keyword id="KW-0436">Ligase</keyword>
<keyword id="KW-0460">Magnesium</keyword>
<keyword id="KW-0479">Metal-binding</keyword>
<keyword id="KW-0547">Nucleotide-binding</keyword>
<keyword id="KW-0648">Protein biosynthesis</keyword>
<keyword id="KW-0694">RNA-binding</keyword>
<keyword id="KW-0820">tRNA-binding</keyword>
<dbReference type="EC" id="6.1.1.20" evidence="1"/>
<dbReference type="EMBL" id="CP000088">
    <property type="protein sequence ID" value="AAZ56093.1"/>
    <property type="molecule type" value="Genomic_DNA"/>
</dbReference>
<dbReference type="RefSeq" id="WP_011292483.1">
    <property type="nucleotide sequence ID" value="NC_007333.1"/>
</dbReference>
<dbReference type="SMR" id="Q47N76"/>
<dbReference type="STRING" id="269800.Tfu_2060"/>
<dbReference type="KEGG" id="tfu:Tfu_2060"/>
<dbReference type="eggNOG" id="COG0072">
    <property type="taxonomic scope" value="Bacteria"/>
</dbReference>
<dbReference type="eggNOG" id="COG0073">
    <property type="taxonomic scope" value="Bacteria"/>
</dbReference>
<dbReference type="HOGENOM" id="CLU_016891_0_0_11"/>
<dbReference type="OrthoDB" id="9805455at2"/>
<dbReference type="GO" id="GO:0009328">
    <property type="term" value="C:phenylalanine-tRNA ligase complex"/>
    <property type="evidence" value="ECO:0007669"/>
    <property type="project" value="TreeGrafter"/>
</dbReference>
<dbReference type="GO" id="GO:0005524">
    <property type="term" value="F:ATP binding"/>
    <property type="evidence" value="ECO:0007669"/>
    <property type="project" value="UniProtKB-UniRule"/>
</dbReference>
<dbReference type="GO" id="GO:0000287">
    <property type="term" value="F:magnesium ion binding"/>
    <property type="evidence" value="ECO:0007669"/>
    <property type="project" value="UniProtKB-UniRule"/>
</dbReference>
<dbReference type="GO" id="GO:0004826">
    <property type="term" value="F:phenylalanine-tRNA ligase activity"/>
    <property type="evidence" value="ECO:0007669"/>
    <property type="project" value="UniProtKB-UniRule"/>
</dbReference>
<dbReference type="GO" id="GO:0000049">
    <property type="term" value="F:tRNA binding"/>
    <property type="evidence" value="ECO:0007669"/>
    <property type="project" value="UniProtKB-KW"/>
</dbReference>
<dbReference type="GO" id="GO:0006432">
    <property type="term" value="P:phenylalanyl-tRNA aminoacylation"/>
    <property type="evidence" value="ECO:0007669"/>
    <property type="project" value="UniProtKB-UniRule"/>
</dbReference>
<dbReference type="CDD" id="cd00769">
    <property type="entry name" value="PheRS_beta_core"/>
    <property type="match status" value="1"/>
</dbReference>
<dbReference type="CDD" id="cd02796">
    <property type="entry name" value="tRNA_bind_bactPheRS"/>
    <property type="match status" value="1"/>
</dbReference>
<dbReference type="FunFam" id="2.40.50.140:FF:000045">
    <property type="entry name" value="Phenylalanine--tRNA ligase beta subunit"/>
    <property type="match status" value="1"/>
</dbReference>
<dbReference type="FunFam" id="3.30.70.380:FF:000001">
    <property type="entry name" value="Phenylalanine--tRNA ligase beta subunit"/>
    <property type="match status" value="1"/>
</dbReference>
<dbReference type="FunFam" id="3.30.930.10:FF:000130">
    <property type="entry name" value="Phenylalanine--tRNA ligase beta subunit"/>
    <property type="match status" value="1"/>
</dbReference>
<dbReference type="FunFam" id="3.50.40.10:FF:000001">
    <property type="entry name" value="Phenylalanine--tRNA ligase beta subunit"/>
    <property type="match status" value="1"/>
</dbReference>
<dbReference type="Gene3D" id="3.30.56.10">
    <property type="match status" value="2"/>
</dbReference>
<dbReference type="Gene3D" id="3.30.930.10">
    <property type="entry name" value="Bira Bifunctional Protein, Domain 2"/>
    <property type="match status" value="1"/>
</dbReference>
<dbReference type="Gene3D" id="3.30.70.380">
    <property type="entry name" value="Ferrodoxin-fold anticodon-binding domain"/>
    <property type="match status" value="1"/>
</dbReference>
<dbReference type="Gene3D" id="2.40.50.140">
    <property type="entry name" value="Nucleic acid-binding proteins"/>
    <property type="match status" value="1"/>
</dbReference>
<dbReference type="Gene3D" id="3.50.40.10">
    <property type="entry name" value="Phenylalanyl-trna Synthetase, Chain B, domain 3"/>
    <property type="match status" value="1"/>
</dbReference>
<dbReference type="HAMAP" id="MF_00283">
    <property type="entry name" value="Phe_tRNA_synth_beta1"/>
    <property type="match status" value="1"/>
</dbReference>
<dbReference type="InterPro" id="IPR045864">
    <property type="entry name" value="aa-tRNA-synth_II/BPL/LPL"/>
</dbReference>
<dbReference type="InterPro" id="IPR005146">
    <property type="entry name" value="B3/B4_tRNA-bd"/>
</dbReference>
<dbReference type="InterPro" id="IPR009061">
    <property type="entry name" value="DNA-bd_dom_put_sf"/>
</dbReference>
<dbReference type="InterPro" id="IPR005121">
    <property type="entry name" value="Fdx_antiC-bd"/>
</dbReference>
<dbReference type="InterPro" id="IPR036690">
    <property type="entry name" value="Fdx_antiC-bd_sf"/>
</dbReference>
<dbReference type="InterPro" id="IPR012340">
    <property type="entry name" value="NA-bd_OB-fold"/>
</dbReference>
<dbReference type="InterPro" id="IPR045060">
    <property type="entry name" value="Phe-tRNA-ligase_IIc_bsu"/>
</dbReference>
<dbReference type="InterPro" id="IPR004532">
    <property type="entry name" value="Phe-tRNA-ligase_IIc_bsu_bact"/>
</dbReference>
<dbReference type="InterPro" id="IPR020825">
    <property type="entry name" value="Phe-tRNA_synthase-like_B3/B4"/>
</dbReference>
<dbReference type="InterPro" id="IPR041616">
    <property type="entry name" value="PheRS_beta_core"/>
</dbReference>
<dbReference type="InterPro" id="IPR002547">
    <property type="entry name" value="tRNA-bd_dom"/>
</dbReference>
<dbReference type="InterPro" id="IPR033714">
    <property type="entry name" value="tRNA_bind_bactPheRS"/>
</dbReference>
<dbReference type="InterPro" id="IPR005147">
    <property type="entry name" value="tRNA_synthase_B5-dom"/>
</dbReference>
<dbReference type="NCBIfam" id="TIGR00472">
    <property type="entry name" value="pheT_bact"/>
    <property type="match status" value="1"/>
</dbReference>
<dbReference type="PANTHER" id="PTHR10947:SF0">
    <property type="entry name" value="PHENYLALANINE--TRNA LIGASE BETA SUBUNIT"/>
    <property type="match status" value="1"/>
</dbReference>
<dbReference type="PANTHER" id="PTHR10947">
    <property type="entry name" value="PHENYLALANYL-TRNA SYNTHETASE BETA CHAIN AND LEUCINE-RICH REPEAT-CONTAINING PROTEIN 47"/>
    <property type="match status" value="1"/>
</dbReference>
<dbReference type="Pfam" id="PF03483">
    <property type="entry name" value="B3_4"/>
    <property type="match status" value="1"/>
</dbReference>
<dbReference type="Pfam" id="PF03484">
    <property type="entry name" value="B5"/>
    <property type="match status" value="1"/>
</dbReference>
<dbReference type="Pfam" id="PF03147">
    <property type="entry name" value="FDX-ACB"/>
    <property type="match status" value="1"/>
</dbReference>
<dbReference type="Pfam" id="PF01588">
    <property type="entry name" value="tRNA_bind"/>
    <property type="match status" value="1"/>
</dbReference>
<dbReference type="Pfam" id="PF17759">
    <property type="entry name" value="tRNA_synthFbeta"/>
    <property type="match status" value="1"/>
</dbReference>
<dbReference type="SMART" id="SM00873">
    <property type="entry name" value="B3_4"/>
    <property type="match status" value="1"/>
</dbReference>
<dbReference type="SMART" id="SM00874">
    <property type="entry name" value="B5"/>
    <property type="match status" value="1"/>
</dbReference>
<dbReference type="SMART" id="SM00896">
    <property type="entry name" value="FDX-ACB"/>
    <property type="match status" value="1"/>
</dbReference>
<dbReference type="SUPFAM" id="SSF54991">
    <property type="entry name" value="Anticodon-binding domain of PheRS"/>
    <property type="match status" value="1"/>
</dbReference>
<dbReference type="SUPFAM" id="SSF55681">
    <property type="entry name" value="Class II aaRS and biotin synthetases"/>
    <property type="match status" value="1"/>
</dbReference>
<dbReference type="SUPFAM" id="SSF50249">
    <property type="entry name" value="Nucleic acid-binding proteins"/>
    <property type="match status" value="1"/>
</dbReference>
<dbReference type="SUPFAM" id="SSF56037">
    <property type="entry name" value="PheT/TilS domain"/>
    <property type="match status" value="1"/>
</dbReference>
<dbReference type="SUPFAM" id="SSF46955">
    <property type="entry name" value="Putative DNA-binding domain"/>
    <property type="match status" value="1"/>
</dbReference>
<dbReference type="PROSITE" id="PS51483">
    <property type="entry name" value="B5"/>
    <property type="match status" value="1"/>
</dbReference>
<dbReference type="PROSITE" id="PS51447">
    <property type="entry name" value="FDX_ACB"/>
    <property type="match status" value="1"/>
</dbReference>
<dbReference type="PROSITE" id="PS50886">
    <property type="entry name" value="TRBD"/>
    <property type="match status" value="1"/>
</dbReference>
<protein>
    <recommendedName>
        <fullName evidence="1">Phenylalanine--tRNA ligase beta subunit</fullName>
        <ecNumber evidence="1">6.1.1.20</ecNumber>
    </recommendedName>
    <alternativeName>
        <fullName evidence="1">Phenylalanyl-tRNA synthetase beta subunit</fullName>
        <shortName evidence="1">PheRS</shortName>
    </alternativeName>
</protein>
<gene>
    <name evidence="1" type="primary">pheT</name>
    <name type="ordered locus">Tfu_2060</name>
</gene>
<organism>
    <name type="scientific">Thermobifida fusca (strain YX)</name>
    <dbReference type="NCBI Taxonomy" id="269800"/>
    <lineage>
        <taxon>Bacteria</taxon>
        <taxon>Bacillati</taxon>
        <taxon>Actinomycetota</taxon>
        <taxon>Actinomycetes</taxon>
        <taxon>Streptosporangiales</taxon>
        <taxon>Nocardiopsidaceae</taxon>
        <taxon>Thermobifida</taxon>
    </lineage>
</organism>
<proteinExistence type="inferred from homology"/>